<gene>
    <name type="ordered locus">UNCMA_30400</name>
    <name type="ORF">LRC112</name>
</gene>
<name>Y3040_METAR</name>
<dbReference type="EMBL" id="AM114193">
    <property type="protein sequence ID" value="CAJ35132.1"/>
    <property type="molecule type" value="Genomic_DNA"/>
</dbReference>
<dbReference type="RefSeq" id="WP_012037355.1">
    <property type="nucleotide sequence ID" value="NC_009464.1"/>
</dbReference>
<dbReference type="SMR" id="Q0W8Z4"/>
<dbReference type="STRING" id="351160.LRC112"/>
<dbReference type="GeneID" id="5142789"/>
<dbReference type="KEGG" id="rci:LRC112"/>
<dbReference type="eggNOG" id="arCOG02287">
    <property type="taxonomic scope" value="Archaea"/>
</dbReference>
<dbReference type="OrthoDB" id="59443at2157"/>
<dbReference type="Proteomes" id="UP000000663">
    <property type="component" value="Chromosome"/>
</dbReference>
<dbReference type="Gene3D" id="3.30.110.70">
    <property type="entry name" value="Hypothetical protein apc22750. Chain B"/>
    <property type="match status" value="1"/>
</dbReference>
<dbReference type="HAMAP" id="MF_00338">
    <property type="entry name" value="UPF0145"/>
    <property type="match status" value="1"/>
</dbReference>
<dbReference type="InterPro" id="IPR035439">
    <property type="entry name" value="UPF0145_dom_sf"/>
</dbReference>
<dbReference type="InterPro" id="IPR002765">
    <property type="entry name" value="UPF0145_YbjQ-like"/>
</dbReference>
<dbReference type="PANTHER" id="PTHR34068:SF2">
    <property type="entry name" value="UPF0145 PROTEIN SCO3412"/>
    <property type="match status" value="1"/>
</dbReference>
<dbReference type="PANTHER" id="PTHR34068">
    <property type="entry name" value="UPF0145 PROTEIN YBJQ"/>
    <property type="match status" value="1"/>
</dbReference>
<dbReference type="Pfam" id="PF01906">
    <property type="entry name" value="YbjQ_1"/>
    <property type="match status" value="1"/>
</dbReference>
<dbReference type="SUPFAM" id="SSF117782">
    <property type="entry name" value="YbjQ-like"/>
    <property type="match status" value="1"/>
</dbReference>
<reference key="1">
    <citation type="journal article" date="2006" name="Science">
        <title>Genome of rice cluster I archaea -- the key methane producers in the rice rhizosphere.</title>
        <authorList>
            <person name="Erkel C."/>
            <person name="Kube M."/>
            <person name="Reinhardt R."/>
            <person name="Liesack W."/>
        </authorList>
    </citation>
    <scope>NUCLEOTIDE SEQUENCE [LARGE SCALE GENOMIC DNA]</scope>
    <source>
        <strain>DSM 22066 / NBRC 105507 / MRE50</strain>
    </source>
</reference>
<proteinExistence type="inferred from homology"/>
<comment type="similarity">
    <text evidence="1">Belongs to the UPF0145 family.</text>
</comment>
<evidence type="ECO:0000255" key="1">
    <source>
        <dbReference type="HAMAP-Rule" id="MF_00338"/>
    </source>
</evidence>
<organism>
    <name type="scientific">Methanocella arvoryzae (strain DSM 22066 / NBRC 105507 / MRE50)</name>
    <dbReference type="NCBI Taxonomy" id="351160"/>
    <lineage>
        <taxon>Archaea</taxon>
        <taxon>Methanobacteriati</taxon>
        <taxon>Methanobacteriota</taxon>
        <taxon>Stenosarchaea group</taxon>
        <taxon>Methanomicrobia</taxon>
        <taxon>Methanocellales</taxon>
        <taxon>Methanocellaceae</taxon>
        <taxon>Methanocella</taxon>
    </lineage>
</organism>
<feature type="chain" id="PRO_1000013038" description="UPF0145 protein UNCMA_30400">
    <location>
        <begin position="1"/>
        <end position="120"/>
    </location>
</feature>
<sequence length="120" mass="13026">MVEDIIIVSTPYVPGYKITKTYGFTWGLIVRSRGIGGNIIASLRTIFGGEIHEYTELLNQSRQYALDRMKQHAREMGANAVVSVGFDSSDIGQNMSEVLAFGTAVTVEPETAASSPVRLG</sequence>
<keyword id="KW-1185">Reference proteome</keyword>
<protein>
    <recommendedName>
        <fullName evidence="1">UPF0145 protein UNCMA_30400</fullName>
    </recommendedName>
</protein>
<accession>Q0W8Z4</accession>